<gene>
    <name evidence="1" type="primary">hisB</name>
    <name type="ordered locus">Mbar_A1310</name>
</gene>
<organism>
    <name type="scientific">Methanosarcina barkeri (strain Fusaro / DSM 804)</name>
    <dbReference type="NCBI Taxonomy" id="269797"/>
    <lineage>
        <taxon>Archaea</taxon>
        <taxon>Methanobacteriati</taxon>
        <taxon>Methanobacteriota</taxon>
        <taxon>Stenosarchaea group</taxon>
        <taxon>Methanomicrobia</taxon>
        <taxon>Methanosarcinales</taxon>
        <taxon>Methanosarcinaceae</taxon>
        <taxon>Methanosarcina</taxon>
    </lineage>
</organism>
<reference key="1">
    <citation type="journal article" date="2006" name="J. Bacteriol.">
        <title>The Methanosarcina barkeri genome: comparative analysis with Methanosarcina acetivorans and Methanosarcina mazei reveals extensive rearrangement within methanosarcinal genomes.</title>
        <authorList>
            <person name="Maeder D.L."/>
            <person name="Anderson I."/>
            <person name="Brettin T.S."/>
            <person name="Bruce D.C."/>
            <person name="Gilna P."/>
            <person name="Han C.S."/>
            <person name="Lapidus A."/>
            <person name="Metcalf W.W."/>
            <person name="Saunders E."/>
            <person name="Tapia R."/>
            <person name="Sowers K.R."/>
        </authorList>
    </citation>
    <scope>NUCLEOTIDE SEQUENCE [LARGE SCALE GENOMIC DNA]</scope>
    <source>
        <strain>Fusaro / DSM 804</strain>
    </source>
</reference>
<comment type="catalytic activity">
    <reaction evidence="1">
        <text>D-erythro-1-(imidazol-4-yl)glycerol 3-phosphate = 3-(imidazol-4-yl)-2-oxopropyl phosphate + H2O</text>
        <dbReference type="Rhea" id="RHEA:11040"/>
        <dbReference type="ChEBI" id="CHEBI:15377"/>
        <dbReference type="ChEBI" id="CHEBI:57766"/>
        <dbReference type="ChEBI" id="CHEBI:58278"/>
        <dbReference type="EC" id="4.2.1.19"/>
    </reaction>
</comment>
<comment type="pathway">
    <text evidence="1">Amino-acid biosynthesis; L-histidine biosynthesis; L-histidine from 5-phospho-alpha-D-ribose 1-diphosphate: step 6/9.</text>
</comment>
<comment type="subcellular location">
    <subcellularLocation>
        <location evidence="1">Cytoplasm</location>
    </subcellularLocation>
</comment>
<comment type="similarity">
    <text evidence="1">Belongs to the imidazoleglycerol-phosphate dehydratase family.</text>
</comment>
<keyword id="KW-0028">Amino-acid biosynthesis</keyword>
<keyword id="KW-0963">Cytoplasm</keyword>
<keyword id="KW-0368">Histidine biosynthesis</keyword>
<keyword id="KW-0456">Lyase</keyword>
<name>HIS7_METBF</name>
<sequence length="191" mass="20958">MRTGRMSRKTKETDIQLELNLDGTGIADVNTGIGFFDHMLTSFARHAEFDLKVRAEGDLYVDEHHLVEDTGIVLGKVLAEALGDMAGTARFGEARIPMDEALADVALDIGGRSYLVLKAEFASPQVGQFSTQLVKHFFETLASNAKITIHASVYGDNDHHKIEALFKAFAYAMKRAVKIEGKEVKSTKGTL</sequence>
<accession>Q46CW9</accession>
<protein>
    <recommendedName>
        <fullName evidence="1">Imidazoleglycerol-phosphate dehydratase</fullName>
        <shortName evidence="1">IGPD</shortName>
        <ecNumber evidence="1">4.2.1.19</ecNumber>
    </recommendedName>
</protein>
<evidence type="ECO:0000255" key="1">
    <source>
        <dbReference type="HAMAP-Rule" id="MF_00076"/>
    </source>
</evidence>
<feature type="chain" id="PRO_1000010294" description="Imidazoleglycerol-phosphate dehydratase">
    <location>
        <begin position="1"/>
        <end position="191"/>
    </location>
</feature>
<dbReference type="EC" id="4.2.1.19" evidence="1"/>
<dbReference type="EMBL" id="CP000099">
    <property type="protein sequence ID" value="AAZ70273.1"/>
    <property type="molecule type" value="Genomic_DNA"/>
</dbReference>
<dbReference type="SMR" id="Q46CW9"/>
<dbReference type="STRING" id="269797.Mbar_A1310"/>
<dbReference type="PaxDb" id="269797-Mbar_A1310"/>
<dbReference type="KEGG" id="mba:Mbar_A1310"/>
<dbReference type="eggNOG" id="arCOG04398">
    <property type="taxonomic scope" value="Archaea"/>
</dbReference>
<dbReference type="HOGENOM" id="CLU_044308_2_0_2"/>
<dbReference type="OrthoDB" id="103579at2157"/>
<dbReference type="UniPathway" id="UPA00031">
    <property type="reaction ID" value="UER00011"/>
</dbReference>
<dbReference type="GO" id="GO:0005737">
    <property type="term" value="C:cytoplasm"/>
    <property type="evidence" value="ECO:0007669"/>
    <property type="project" value="UniProtKB-SubCell"/>
</dbReference>
<dbReference type="GO" id="GO:0004424">
    <property type="term" value="F:imidazoleglycerol-phosphate dehydratase activity"/>
    <property type="evidence" value="ECO:0007669"/>
    <property type="project" value="UniProtKB-UniRule"/>
</dbReference>
<dbReference type="GO" id="GO:0000105">
    <property type="term" value="P:L-histidine biosynthetic process"/>
    <property type="evidence" value="ECO:0007669"/>
    <property type="project" value="UniProtKB-UniRule"/>
</dbReference>
<dbReference type="CDD" id="cd07914">
    <property type="entry name" value="IGPD"/>
    <property type="match status" value="1"/>
</dbReference>
<dbReference type="FunFam" id="3.30.230.40:FF:000001">
    <property type="entry name" value="Imidazoleglycerol-phosphate dehydratase HisB"/>
    <property type="match status" value="1"/>
</dbReference>
<dbReference type="FunFam" id="3.30.230.40:FF:000003">
    <property type="entry name" value="Imidazoleglycerol-phosphate dehydratase HisB"/>
    <property type="match status" value="1"/>
</dbReference>
<dbReference type="Gene3D" id="3.30.230.40">
    <property type="entry name" value="Imidazole glycerol phosphate dehydratase, domain 1"/>
    <property type="match status" value="2"/>
</dbReference>
<dbReference type="HAMAP" id="MF_00076">
    <property type="entry name" value="HisB"/>
    <property type="match status" value="1"/>
</dbReference>
<dbReference type="InterPro" id="IPR038494">
    <property type="entry name" value="IGPD_sf"/>
</dbReference>
<dbReference type="InterPro" id="IPR000807">
    <property type="entry name" value="ImidazoleglycerolP_deHydtase"/>
</dbReference>
<dbReference type="InterPro" id="IPR020565">
    <property type="entry name" value="ImidazoleglycerP_deHydtase_CS"/>
</dbReference>
<dbReference type="InterPro" id="IPR020568">
    <property type="entry name" value="Ribosomal_Su5_D2-typ_SF"/>
</dbReference>
<dbReference type="NCBIfam" id="NF002111">
    <property type="entry name" value="PRK00951.2-1"/>
    <property type="match status" value="1"/>
</dbReference>
<dbReference type="NCBIfam" id="NF002114">
    <property type="entry name" value="PRK00951.2-4"/>
    <property type="match status" value="1"/>
</dbReference>
<dbReference type="PANTHER" id="PTHR23133:SF2">
    <property type="entry name" value="IMIDAZOLEGLYCEROL-PHOSPHATE DEHYDRATASE"/>
    <property type="match status" value="1"/>
</dbReference>
<dbReference type="PANTHER" id="PTHR23133">
    <property type="entry name" value="IMIDAZOLEGLYCEROL-PHOSPHATE DEHYDRATASE HIS7"/>
    <property type="match status" value="1"/>
</dbReference>
<dbReference type="Pfam" id="PF00475">
    <property type="entry name" value="IGPD"/>
    <property type="match status" value="1"/>
</dbReference>
<dbReference type="SUPFAM" id="SSF54211">
    <property type="entry name" value="Ribosomal protein S5 domain 2-like"/>
    <property type="match status" value="2"/>
</dbReference>
<dbReference type="PROSITE" id="PS00954">
    <property type="entry name" value="IGP_DEHYDRATASE_1"/>
    <property type="match status" value="1"/>
</dbReference>
<dbReference type="PROSITE" id="PS00955">
    <property type="entry name" value="IGP_DEHYDRATASE_2"/>
    <property type="match status" value="1"/>
</dbReference>
<proteinExistence type="inferred from homology"/>